<evidence type="ECO:0000250" key="1">
    <source>
        <dbReference type="UniProtKB" id="P0C1Z0"/>
    </source>
</evidence>
<evidence type="ECO:0000269" key="2">
    <source>
    </source>
</evidence>
<evidence type="ECO:0000305" key="3"/>
<keyword id="KW-0008">Acetylcholine receptor inhibiting toxin</keyword>
<keyword id="KW-0903">Direct protein sequencing</keyword>
<keyword id="KW-1015">Disulfide bond</keyword>
<keyword id="KW-0872">Ion channel impairing toxin</keyword>
<keyword id="KW-0528">Neurotoxin</keyword>
<keyword id="KW-0629">Postsynaptic neurotoxin</keyword>
<keyword id="KW-0964">Secreted</keyword>
<keyword id="KW-0800">Toxin</keyword>
<proteinExistence type="evidence at protein level"/>
<comment type="function">
    <text>Binds to muscle nicotinic acetylcholine receptor (nAChR) and inhibit acetylcholine from binding to the receptor, thereby impairing neuromuscular transmission.</text>
</comment>
<comment type="subcellular location">
    <subcellularLocation>
        <location evidence="2">Secreted</location>
    </subcellularLocation>
</comment>
<comment type="tissue specificity">
    <text evidence="3">Expressed by the venom gland.</text>
</comment>
<comment type="toxic dose">
    <text evidence="2">LD(50) is 0.10 mg/kg by intravenous injection.</text>
</comment>
<comment type="similarity">
    <text evidence="3">Belongs to the three-finger toxin family. Short-chain subfamily. Type I alpha-neurotoxin sub-subfamily.</text>
</comment>
<organism>
    <name type="scientific">Naja haje haje</name>
    <name type="common">Egyptian cobra</name>
    <dbReference type="NCBI Taxonomy" id="8642"/>
    <lineage>
        <taxon>Eukaryota</taxon>
        <taxon>Metazoa</taxon>
        <taxon>Chordata</taxon>
        <taxon>Craniata</taxon>
        <taxon>Vertebrata</taxon>
        <taxon>Euteleostomi</taxon>
        <taxon>Lepidosauria</taxon>
        <taxon>Squamata</taxon>
        <taxon>Bifurcata</taxon>
        <taxon>Unidentata</taxon>
        <taxon>Episquamata</taxon>
        <taxon>Toxicofera</taxon>
        <taxon>Serpentes</taxon>
        <taxon>Colubroidea</taxon>
        <taxon>Elapidae</taxon>
        <taxon>Elapinae</taxon>
        <taxon>Naja</taxon>
    </lineage>
</organism>
<accession>P68418</accession>
<accession>P01429</accession>
<reference key="1">
    <citation type="journal article" date="1978" name="Biochim. Biophys. Acta">
        <title>Purification, some properties and the primary structures of three reduced and S-carboxymethylated toxins (CM-5, CM-6 and CM-10a) from Naja haje haje (Egyptian cobra) venom.</title>
        <authorList>
            <person name="Joubert F.J."/>
            <person name="Taljaard N."/>
        </authorList>
    </citation>
    <scope>PROTEIN SEQUENCE</scope>
    <scope>TOXIC DOSE</scope>
    <scope>SUBCELLULAR LOCATION</scope>
    <source>
        <tissue>Venom</tissue>
    </source>
</reference>
<protein>
    <recommendedName>
        <fullName>Short neurotoxin 1</fullName>
    </recommendedName>
    <alternativeName>
        <fullName>Toxin CM-6</fullName>
    </alternativeName>
</protein>
<dbReference type="SMR" id="P68418"/>
<dbReference type="GO" id="GO:0005576">
    <property type="term" value="C:extracellular region"/>
    <property type="evidence" value="ECO:0007669"/>
    <property type="project" value="UniProtKB-SubCell"/>
</dbReference>
<dbReference type="GO" id="GO:0030550">
    <property type="term" value="F:acetylcholine receptor inhibitor activity"/>
    <property type="evidence" value="ECO:0007669"/>
    <property type="project" value="UniProtKB-KW"/>
</dbReference>
<dbReference type="GO" id="GO:0099106">
    <property type="term" value="F:ion channel regulator activity"/>
    <property type="evidence" value="ECO:0007669"/>
    <property type="project" value="UniProtKB-KW"/>
</dbReference>
<dbReference type="GO" id="GO:0090729">
    <property type="term" value="F:toxin activity"/>
    <property type="evidence" value="ECO:0007669"/>
    <property type="project" value="UniProtKB-KW"/>
</dbReference>
<dbReference type="CDD" id="cd00206">
    <property type="entry name" value="TFP_snake_toxin"/>
    <property type="match status" value="1"/>
</dbReference>
<dbReference type="FunFam" id="2.10.60.10:FF:000024">
    <property type="entry name" value="Cytotoxin 1"/>
    <property type="match status" value="1"/>
</dbReference>
<dbReference type="Gene3D" id="2.10.60.10">
    <property type="entry name" value="CD59"/>
    <property type="match status" value="1"/>
</dbReference>
<dbReference type="InterPro" id="IPR003571">
    <property type="entry name" value="Snake_3FTx"/>
</dbReference>
<dbReference type="InterPro" id="IPR045860">
    <property type="entry name" value="Snake_toxin-like_sf"/>
</dbReference>
<dbReference type="InterPro" id="IPR018354">
    <property type="entry name" value="Snake_toxin_con_site"/>
</dbReference>
<dbReference type="InterPro" id="IPR054131">
    <property type="entry name" value="Toxin_cobra-type"/>
</dbReference>
<dbReference type="Pfam" id="PF21947">
    <property type="entry name" value="Toxin_cobra-type"/>
    <property type="match status" value="1"/>
</dbReference>
<dbReference type="SUPFAM" id="SSF57302">
    <property type="entry name" value="Snake toxin-like"/>
    <property type="match status" value="1"/>
</dbReference>
<dbReference type="PROSITE" id="PS00272">
    <property type="entry name" value="SNAKE_TOXIN"/>
    <property type="match status" value="1"/>
</dbReference>
<feature type="chain" id="PRO_0000093600" description="Short neurotoxin 1" evidence="2">
    <location>
        <begin position="1"/>
        <end position="61"/>
    </location>
</feature>
<feature type="disulfide bond" evidence="1">
    <location>
        <begin position="3"/>
        <end position="23"/>
    </location>
</feature>
<feature type="disulfide bond" evidence="1">
    <location>
        <begin position="17"/>
        <end position="40"/>
    </location>
</feature>
<feature type="disulfide bond" evidence="1">
    <location>
        <begin position="42"/>
        <end position="53"/>
    </location>
</feature>
<feature type="disulfide bond" evidence="1">
    <location>
        <begin position="54"/>
        <end position="59"/>
    </location>
</feature>
<name>3S11_NAJHH</name>
<sequence>LECHNQQSSQPPTTKTCPGETNCYKKRWRDHRGSITERGCGCPSVKKGIEINCCTTDKCNN</sequence>